<accession>P0CAG1</accession>
<keyword id="KW-0426">Late protein</keyword>
<keyword id="KW-0479">Metal-binding</keyword>
<keyword id="KW-0862">Zinc</keyword>
<keyword id="KW-0863">Zinc-finger</keyword>
<evidence type="ECO:0000255" key="1"/>
<evidence type="ECO:0000305" key="2"/>
<comment type="induction">
    <text evidence="2">Expressed in the late phase of the viral replicative cycle.</text>
</comment>
<comment type="similarity">
    <text evidence="2">Belongs to the asfivirus B385R family.</text>
</comment>
<organism>
    <name type="scientific">African swine fever virus (isolate Tick/South Africa/Pretoriuskop Pr4/1996)</name>
    <name type="common">ASFV</name>
    <dbReference type="NCBI Taxonomy" id="561443"/>
    <lineage>
        <taxon>Viruses</taxon>
        <taxon>Varidnaviria</taxon>
        <taxon>Bamfordvirae</taxon>
        <taxon>Nucleocytoviricota</taxon>
        <taxon>Pokkesviricetes</taxon>
        <taxon>Asfuvirales</taxon>
        <taxon>Asfarviridae</taxon>
        <taxon>Asfivirus</taxon>
        <taxon>African swine fever virus</taxon>
    </lineage>
</organism>
<name>VF385_ASFP4</name>
<sequence>MDEIINKYQAVEKLFKEIQEGLAMYDQYKTLINELLHYNNHIKQEYFNFLMIISPYLIRAHSGETLRNKVNNEIKRLILVENINTKISKTLVSVNFLLQKKLSTDGVKTKNMWCTNNPMLQVKTAHNLFKQLCDTQSKTQWVQTLKYKECKYCHTDMVFNTTQFGLQCPNCGCIQELMGTIFDETHFYNHDGQKAKSGIFNPNRHYRFWIEHILGRNSEQELGTKQDPCGTKVLQQLKKIIKRDNKCIALLTVENIRKMLKEINRTDLNNCVSLILRKLTGVGPPQISESILLRGEYIFTEAIKIREKVCKKGRINRNYYPYYIYKIFDAILPPNDTTNRRILQYIHLQGNDTLANNDSEWESICMELPEIKWKPTDRTHCVHFF</sequence>
<dbReference type="EMBL" id="AY261363">
    <property type="status" value="NOT_ANNOTATED_CDS"/>
    <property type="molecule type" value="Genomic_DNA"/>
</dbReference>
<dbReference type="SMR" id="P0CAG1"/>
<dbReference type="Proteomes" id="UP000000859">
    <property type="component" value="Segment"/>
</dbReference>
<dbReference type="GO" id="GO:0008270">
    <property type="term" value="F:zinc ion binding"/>
    <property type="evidence" value="ECO:0007669"/>
    <property type="project" value="UniProtKB-KW"/>
</dbReference>
<dbReference type="GO" id="GO:0046782">
    <property type="term" value="P:regulation of viral transcription"/>
    <property type="evidence" value="ECO:0007669"/>
    <property type="project" value="InterPro"/>
</dbReference>
<dbReference type="InterPro" id="IPR007031">
    <property type="entry name" value="Poxvirus_VLTF3"/>
</dbReference>
<dbReference type="InterPro" id="IPR014900">
    <property type="entry name" value="VLTF-3_Zn_ribbon"/>
</dbReference>
<dbReference type="Pfam" id="PF08792">
    <property type="entry name" value="A2L_zn_ribbon"/>
    <property type="match status" value="1"/>
</dbReference>
<dbReference type="Pfam" id="PF04947">
    <property type="entry name" value="Pox_VLTF3"/>
    <property type="match status" value="1"/>
</dbReference>
<dbReference type="PROSITE" id="PS00028">
    <property type="entry name" value="ZINC_FINGER_C2H2_1"/>
    <property type="match status" value="1"/>
</dbReference>
<gene>
    <name type="ordered locus">Pret-092</name>
</gene>
<protein>
    <recommendedName>
        <fullName>Zinc finger protein B385R</fullName>
        <shortName>pB385R</shortName>
    </recommendedName>
</protein>
<proteinExistence type="inferred from homology"/>
<organismHost>
    <name type="scientific">Ornithodoros</name>
    <name type="common">relapsing fever ticks</name>
    <dbReference type="NCBI Taxonomy" id="6937"/>
</organismHost>
<organismHost>
    <name type="scientific">Phacochoerus aethiopicus</name>
    <name type="common">Warthog</name>
    <dbReference type="NCBI Taxonomy" id="85517"/>
</organismHost>
<organismHost>
    <name type="scientific">Phacochoerus africanus</name>
    <name type="common">Warthog</name>
    <dbReference type="NCBI Taxonomy" id="41426"/>
</organismHost>
<organismHost>
    <name type="scientific">Potamochoerus larvatus</name>
    <name type="common">Bushpig</name>
    <dbReference type="NCBI Taxonomy" id="273792"/>
</organismHost>
<organismHost>
    <name type="scientific">Sus scrofa</name>
    <name type="common">Pig</name>
    <dbReference type="NCBI Taxonomy" id="9823"/>
</organismHost>
<reference key="1">
    <citation type="submission" date="2003-03" db="EMBL/GenBank/DDBJ databases">
        <title>African swine fever virus genomes.</title>
        <authorList>
            <person name="Kutish G.F."/>
            <person name="Rock D.L."/>
        </authorList>
    </citation>
    <scope>NUCLEOTIDE SEQUENCE [LARGE SCALE GENOMIC DNA]</scope>
</reference>
<feature type="chain" id="PRO_0000373674" description="Zinc finger protein B385R">
    <location>
        <begin position="1"/>
        <end position="385"/>
    </location>
</feature>
<feature type="zinc finger region" description="C2H2-type">
    <location>
        <begin position="166"/>
        <end position="190"/>
    </location>
</feature>
<feature type="zinc finger region" description="C2H2-type" evidence="1">
    <location>
        <begin position="168"/>
        <end position="190"/>
    </location>
</feature>